<dbReference type="EC" id="2.7.7.6" evidence="1"/>
<dbReference type="EMBL" id="CP000848">
    <property type="protein sequence ID" value="ABV75789.1"/>
    <property type="molecule type" value="Genomic_DNA"/>
</dbReference>
<dbReference type="RefSeq" id="WP_012150397.1">
    <property type="nucleotide sequence ID" value="NZ_CP121767.1"/>
</dbReference>
<dbReference type="SMR" id="A8GQW4"/>
<dbReference type="GeneID" id="79936973"/>
<dbReference type="KEGG" id="rri:A1G_01035"/>
<dbReference type="HOGENOM" id="CLU_000524_4_0_5"/>
<dbReference type="Proteomes" id="UP000006832">
    <property type="component" value="Chromosome"/>
</dbReference>
<dbReference type="GO" id="GO:0000428">
    <property type="term" value="C:DNA-directed RNA polymerase complex"/>
    <property type="evidence" value="ECO:0007669"/>
    <property type="project" value="UniProtKB-KW"/>
</dbReference>
<dbReference type="GO" id="GO:0003677">
    <property type="term" value="F:DNA binding"/>
    <property type="evidence" value="ECO:0007669"/>
    <property type="project" value="UniProtKB-UniRule"/>
</dbReference>
<dbReference type="GO" id="GO:0003899">
    <property type="term" value="F:DNA-directed RNA polymerase activity"/>
    <property type="evidence" value="ECO:0007669"/>
    <property type="project" value="UniProtKB-UniRule"/>
</dbReference>
<dbReference type="GO" id="GO:0032549">
    <property type="term" value="F:ribonucleoside binding"/>
    <property type="evidence" value="ECO:0007669"/>
    <property type="project" value="InterPro"/>
</dbReference>
<dbReference type="GO" id="GO:0006351">
    <property type="term" value="P:DNA-templated transcription"/>
    <property type="evidence" value="ECO:0007669"/>
    <property type="project" value="UniProtKB-UniRule"/>
</dbReference>
<dbReference type="CDD" id="cd00653">
    <property type="entry name" value="RNA_pol_B_RPB2"/>
    <property type="match status" value="1"/>
</dbReference>
<dbReference type="Gene3D" id="2.40.50.100">
    <property type="match status" value="1"/>
</dbReference>
<dbReference type="Gene3D" id="2.40.50.150">
    <property type="match status" value="1"/>
</dbReference>
<dbReference type="Gene3D" id="3.90.1100.10">
    <property type="match status" value="2"/>
</dbReference>
<dbReference type="Gene3D" id="2.30.150.10">
    <property type="entry name" value="DNA-directed RNA polymerase, beta subunit, external 1 domain"/>
    <property type="match status" value="1"/>
</dbReference>
<dbReference type="Gene3D" id="2.40.270.10">
    <property type="entry name" value="DNA-directed RNA polymerase, subunit 2, domain 6"/>
    <property type="match status" value="1"/>
</dbReference>
<dbReference type="Gene3D" id="3.90.1800.10">
    <property type="entry name" value="RNA polymerase alpha subunit dimerisation domain"/>
    <property type="match status" value="1"/>
</dbReference>
<dbReference type="HAMAP" id="MF_01321">
    <property type="entry name" value="RNApol_bact_RpoB"/>
    <property type="match status" value="1"/>
</dbReference>
<dbReference type="InterPro" id="IPR042107">
    <property type="entry name" value="DNA-dir_RNA_pol_bsu_ext_1_sf"/>
</dbReference>
<dbReference type="InterPro" id="IPR019462">
    <property type="entry name" value="DNA-dir_RNA_pol_bsu_external_1"/>
</dbReference>
<dbReference type="InterPro" id="IPR015712">
    <property type="entry name" value="DNA-dir_RNA_pol_su2"/>
</dbReference>
<dbReference type="InterPro" id="IPR007120">
    <property type="entry name" value="DNA-dir_RNAP_su2_dom"/>
</dbReference>
<dbReference type="InterPro" id="IPR037033">
    <property type="entry name" value="DNA-dir_RNAP_su2_hyb_sf"/>
</dbReference>
<dbReference type="InterPro" id="IPR010243">
    <property type="entry name" value="RNA_pol_bsu_bac"/>
</dbReference>
<dbReference type="InterPro" id="IPR007121">
    <property type="entry name" value="RNA_pol_bsu_CS"/>
</dbReference>
<dbReference type="InterPro" id="IPR007644">
    <property type="entry name" value="RNA_pol_bsu_protrusion"/>
</dbReference>
<dbReference type="InterPro" id="IPR007642">
    <property type="entry name" value="RNA_pol_Rpb2_2"/>
</dbReference>
<dbReference type="InterPro" id="IPR007645">
    <property type="entry name" value="RNA_pol_Rpb2_3"/>
</dbReference>
<dbReference type="InterPro" id="IPR007641">
    <property type="entry name" value="RNA_pol_Rpb2_7"/>
</dbReference>
<dbReference type="InterPro" id="IPR014724">
    <property type="entry name" value="RNA_pol_RPB2_OB-fold"/>
</dbReference>
<dbReference type="NCBIfam" id="NF001616">
    <property type="entry name" value="PRK00405.1"/>
    <property type="match status" value="1"/>
</dbReference>
<dbReference type="NCBIfam" id="TIGR02013">
    <property type="entry name" value="rpoB"/>
    <property type="match status" value="1"/>
</dbReference>
<dbReference type="PANTHER" id="PTHR20856">
    <property type="entry name" value="DNA-DIRECTED RNA POLYMERASE I SUBUNIT 2"/>
    <property type="match status" value="1"/>
</dbReference>
<dbReference type="Pfam" id="PF04563">
    <property type="entry name" value="RNA_pol_Rpb2_1"/>
    <property type="match status" value="1"/>
</dbReference>
<dbReference type="Pfam" id="PF04561">
    <property type="entry name" value="RNA_pol_Rpb2_2"/>
    <property type="match status" value="1"/>
</dbReference>
<dbReference type="Pfam" id="PF04565">
    <property type="entry name" value="RNA_pol_Rpb2_3"/>
    <property type="match status" value="1"/>
</dbReference>
<dbReference type="Pfam" id="PF10385">
    <property type="entry name" value="RNA_pol_Rpb2_45"/>
    <property type="match status" value="1"/>
</dbReference>
<dbReference type="Pfam" id="PF00562">
    <property type="entry name" value="RNA_pol_Rpb2_6"/>
    <property type="match status" value="1"/>
</dbReference>
<dbReference type="Pfam" id="PF04560">
    <property type="entry name" value="RNA_pol_Rpb2_7"/>
    <property type="match status" value="1"/>
</dbReference>
<dbReference type="SUPFAM" id="SSF64484">
    <property type="entry name" value="beta and beta-prime subunits of DNA dependent RNA-polymerase"/>
    <property type="match status" value="1"/>
</dbReference>
<dbReference type="PROSITE" id="PS01166">
    <property type="entry name" value="RNA_POL_BETA"/>
    <property type="match status" value="1"/>
</dbReference>
<evidence type="ECO:0000255" key="1">
    <source>
        <dbReference type="HAMAP-Rule" id="MF_01321"/>
    </source>
</evidence>
<accession>A8GQW4</accession>
<name>RPOB_RICRS</name>
<reference key="1">
    <citation type="submission" date="2007-09" db="EMBL/GenBank/DDBJ databases">
        <title>Complete genome sequence of Rickettsia rickettsii.</title>
        <authorList>
            <person name="Madan A."/>
            <person name="Fahey J."/>
            <person name="Helton E."/>
            <person name="Ketteman M."/>
            <person name="Madan A."/>
            <person name="Rodrigues S."/>
            <person name="Sanchez A."/>
            <person name="Dasch G."/>
            <person name="Eremeeva M."/>
        </authorList>
    </citation>
    <scope>NUCLEOTIDE SEQUENCE [LARGE SCALE GENOMIC DNA]</scope>
    <source>
        <strain>Sheila Smith</strain>
    </source>
</reference>
<gene>
    <name evidence="1" type="primary">rpoB</name>
    <name type="ordered locus">A1G_01035</name>
</gene>
<sequence length="1373" mass="154258">MVSLRDNIEAQPLSHNRRIRKNFGHINLVADIPNLIEIQKNSYEKNFLQLNIKDSERKNKGLQSILNSIFPISDSSNVANLEFVKYEFDTPKYDVEECSQRSLSYAAPLKVTLRLSIWDIDEDTGTREIKGIKEQEVYMGDIPLMTKNGTFIINGTERVVVSQMHRSPGVFFYHDEGKVHSSGKLLYSARVIPYRGSWLDLEFDAKDVIYFRIDRKRKLYATTLLRAIGMSTEEIIKFYYNSVTYKLVKNKGWAVKFIPQHITAHRLTSDLVDADTGNILLKAGQKITPRLAKKYFGEGLNNILVAHETLIGKYLSEDLRDPASDEVLAKIGEMITADMLNVINDLKIKNVNVLVINPQSGPYIRNTLFADKNQDREAALCDIFRVLRPGEPANIEAAESLFYNLFFDTERYDLSEVGRIKMNSRLELNISEEVTVLTIDDIKNIVRVLVELKDGKGIIDDIDHLGNRRVRSVGELIENQFRIGLVRMEKSVIERMSAGDVDTVMPHDLVNSKILVSVVKEFFSTSQLSQFMDQTNPLSEITHKRRLSALGPGGLSRDRAGFEVRDVHPTHYGRICPIETPEGQNIGLINSMATYARINKHGFIESPYRRVKDGCVTDEVVYLSAIEEGKYKIGQANSKINKDGKLQGEFINCRVEGGNFVMVEPYEVDFIDVTPMQVVSVAASLIPFLENDDANRALMGSNMQRQAVPLIKTDAPFVGTGVEGVVAKDSGASVLALHDGIVEQVDSNRIVIRTLEQKVDGSPSVDIYNLLKFQKSNHNTCINQKPLVKVGHYVKKNDIIADGPSTDNGEIALGRNVLVAFLPWNGYNFEDSILISERIVKEDVFTSIHIEEFEVIARDTRLGPEEITRDIPNVSEEALRHLDEVGIIYIGAEVKAGDILVGKVTPKSESPITPEEKLLRAIFGEKAFDVKDSSLHVPSGVSGTVVEVRVFSRRGVEKDQRAIAIEKQQIEKFAKDRDDELEIIEHFVFSWLEKLLVGQVIINGPKQVKVGQTITTEMLKGLSKGQFWQITVEDANVMNEIEQIKTHYDEKKEALDKRFATKVEKLQSGDDLPQGALKVVKVFIATKHKLQPGDKMAGRHGNKGVISRIVPEEDMPFLEDGTVVDIVLNPLGLPSRMNIGQILETHLGWASINLAKKISTLVKEYKNKHIGIEQIKKFLIELYGENINSILERPEEEIIAFCKKVSKGVHFATPVFDGAKVQDVKDMLKLAGQDPSGQVKLIDGRTGEYFDRLVTVGQKYLLKLHHLVDNKIHSRSIGPYSLVTQQPLGGKSHFGGQRFGEMECWALQAYGAAYTLQEMLTVKSDDVNGRIKTYDSIVRGENNFESGIPESFNVMIKEFRSLCLNVKLEVTSS</sequence>
<organism>
    <name type="scientific">Rickettsia rickettsii (strain Sheila Smith)</name>
    <dbReference type="NCBI Taxonomy" id="392021"/>
    <lineage>
        <taxon>Bacteria</taxon>
        <taxon>Pseudomonadati</taxon>
        <taxon>Pseudomonadota</taxon>
        <taxon>Alphaproteobacteria</taxon>
        <taxon>Rickettsiales</taxon>
        <taxon>Rickettsiaceae</taxon>
        <taxon>Rickettsieae</taxon>
        <taxon>Rickettsia</taxon>
        <taxon>spotted fever group</taxon>
    </lineage>
</organism>
<comment type="function">
    <text evidence="1">DNA-dependent RNA polymerase catalyzes the transcription of DNA into RNA using the four ribonucleoside triphosphates as substrates.</text>
</comment>
<comment type="catalytic activity">
    <reaction evidence="1">
        <text>RNA(n) + a ribonucleoside 5'-triphosphate = RNA(n+1) + diphosphate</text>
        <dbReference type="Rhea" id="RHEA:21248"/>
        <dbReference type="Rhea" id="RHEA-COMP:14527"/>
        <dbReference type="Rhea" id="RHEA-COMP:17342"/>
        <dbReference type="ChEBI" id="CHEBI:33019"/>
        <dbReference type="ChEBI" id="CHEBI:61557"/>
        <dbReference type="ChEBI" id="CHEBI:140395"/>
        <dbReference type="EC" id="2.7.7.6"/>
    </reaction>
</comment>
<comment type="subunit">
    <text evidence="1">The RNAP catalytic core consists of 2 alpha, 1 beta, 1 beta' and 1 omega subunit. When a sigma factor is associated with the core the holoenzyme is formed, which can initiate transcription.</text>
</comment>
<comment type="similarity">
    <text evidence="1">Belongs to the RNA polymerase beta chain family.</text>
</comment>
<feature type="chain" id="PRO_1000051980" description="DNA-directed RNA polymerase subunit beta">
    <location>
        <begin position="1"/>
        <end position="1373"/>
    </location>
</feature>
<protein>
    <recommendedName>
        <fullName evidence="1">DNA-directed RNA polymerase subunit beta</fullName>
        <shortName evidence="1">RNAP subunit beta</shortName>
        <ecNumber evidence="1">2.7.7.6</ecNumber>
    </recommendedName>
    <alternativeName>
        <fullName evidence="1">RNA polymerase subunit beta</fullName>
    </alternativeName>
    <alternativeName>
        <fullName evidence="1">Transcriptase subunit beta</fullName>
    </alternativeName>
</protein>
<proteinExistence type="inferred from homology"/>
<keyword id="KW-0240">DNA-directed RNA polymerase</keyword>
<keyword id="KW-0548">Nucleotidyltransferase</keyword>
<keyword id="KW-0804">Transcription</keyword>
<keyword id="KW-0808">Transferase</keyword>